<accession>M1MR49</accession>
<evidence type="ECO:0000269" key="1">
    <source>
    </source>
</evidence>
<evidence type="ECO:0000269" key="2">
    <source>
    </source>
</evidence>
<evidence type="ECO:0000303" key="3">
    <source>
    </source>
</evidence>
<evidence type="ECO:0000303" key="4">
    <source>
    </source>
</evidence>
<evidence type="ECO:0000305" key="5"/>
<evidence type="ECO:0000305" key="6">
    <source>
    </source>
</evidence>
<evidence type="ECO:0000305" key="7">
    <source>
    </source>
</evidence>
<evidence type="ECO:0000312" key="8">
    <source>
        <dbReference type="EMBL" id="AGF70149.1"/>
    </source>
</evidence>
<evidence type="ECO:0007744" key="9">
    <source>
        <dbReference type="PDB" id="4BOE"/>
    </source>
</evidence>
<evidence type="ECO:0007744" key="10">
    <source>
        <dbReference type="PDB" id="4BQU"/>
    </source>
</evidence>
<evidence type="ECO:0007829" key="11">
    <source>
        <dbReference type="PDB" id="4BOE"/>
    </source>
</evidence>
<dbReference type="EMBL" id="KC412662">
    <property type="protein sequence ID" value="AGF70149.1"/>
    <property type="molecule type" value="mRNA"/>
</dbReference>
<dbReference type="PDB" id="4BOE">
    <property type="method" value="X-ray"/>
    <property type="resolution" value="2.24 A"/>
    <property type="chains" value="A=25-176"/>
</dbReference>
<dbReference type="PDB" id="4BQU">
    <property type="method" value="X-ray"/>
    <property type="resolution" value="2.36 A"/>
    <property type="chains" value="A/B=25-176"/>
</dbReference>
<dbReference type="PDBsum" id="4BOE"/>
<dbReference type="PDBsum" id="4BQU"/>
<dbReference type="SMR" id="M1MR49"/>
<dbReference type="iPTMnet" id="M1MR49"/>
<dbReference type="EvolutionaryTrace" id="M1MR49"/>
<dbReference type="GO" id="GO:0005576">
    <property type="term" value="C:extracellular region"/>
    <property type="evidence" value="ECO:0007669"/>
    <property type="project" value="UniProtKB-SubCell"/>
</dbReference>
<dbReference type="Gene3D" id="2.40.128.20">
    <property type="match status" value="1"/>
</dbReference>
<dbReference type="InterPro" id="IPR012674">
    <property type="entry name" value="Calycin"/>
</dbReference>
<keyword id="KW-0002">3D-structure</keyword>
<keyword id="KW-0903">Direct protein sequencing</keyword>
<keyword id="KW-1015">Disulfide bond</keyword>
<keyword id="KW-0325">Glycoprotein</keyword>
<keyword id="KW-0964">Secreted</keyword>
<keyword id="KW-0732">Signal</keyword>
<comment type="function">
    <text evidence="1 7">Salivary tick protein that modulates host immune response. This protein blocks dendritic cell (DC) differentiation from monocytes (PubMed:23825947). In addition, it inhibits up-regulation of costimulatory molecules and pro-inflammatory cytokines in response to stimuli and promotes up-regulation of co-inhibitory molecules and the anti-inflammatory cytokine interleukin-10 (PubMed:23825947). It has a pocket to accomodate cholesterol, which may have immune-modulatory roles, either directly or through interactions with the host gut microbiota (Probable).</text>
</comment>
<comment type="subunit">
    <text evidence="2">Homodimer; non-disulfide-linked. Each monomer accommodates one molecule of cholesterol in a pocket.</text>
</comment>
<comment type="subcellular location">
    <subcellularLocation>
        <location evidence="1">Secreted</location>
    </subcellularLocation>
</comment>
<comment type="tissue specificity">
    <text evidence="6">Expressed in salivary glands.</text>
</comment>
<comment type="developmental stage">
    <text evidence="1">Only expressed by three day-fed female ticks.</text>
</comment>
<comment type="domain">
    <text evidence="2 7">Each monomer contains a pocket that accomodates cholesterol (PubMed:29167574). Cholesterol derivatives (such as epicholesterol, epicholestanol, epicoprostenol, or 7-dehydrocholesterol) could also fit in the pocket with minor rearrangement of the side chain (Probable). Since arthropods are unable to synthesize cholesterol de novo, it is likely that a cholesterol ligand would be bloodmeal-derived (Probable).</text>
</comment>
<comment type="miscellaneous">
    <text evidence="1">Does not bind to any major populations in peripheral blood mononuclear, including monocytes, B cells, T cells and NK cells, as well as to other blood DC (not differentiated from monocytes).</text>
</comment>
<comment type="similarity">
    <text evidence="5">Belongs to the calycin superfamily. Lipocalin family.</text>
</comment>
<protein>
    <recommendedName>
        <fullName evidence="3 4">Japanin</fullName>
    </recommendedName>
    <alternativeName>
        <fullName evidence="4">18 kDa immune-modulatory lipocalin</fullName>
    </alternativeName>
    <alternativeName>
        <fullName evidence="9 10">Cholesterol binding protein</fullName>
    </alternativeName>
</protein>
<reference evidence="8" key="1">
    <citation type="journal article" date="2013" name="PLoS Pathog.">
        <title>Novel immunomodulators from hard ticks selectively reprogramme human dendritic cell responses.</title>
        <authorList>
            <person name="Preston S.G."/>
            <person name="Majtan J."/>
            <person name="Kouremenou C."/>
            <person name="Rysnik O."/>
            <person name="Burger L.F."/>
            <person name="Cabezas Cruz A."/>
            <person name="Chiong Guzman M."/>
            <person name="Nunn M.A."/>
            <person name="Paesen G.C."/>
            <person name="Nuttall P.A."/>
            <person name="Austyn J.M."/>
        </authorList>
    </citation>
    <scope>NUCLEOTIDE SEQUENCE [MRNA]</scope>
    <scope>PROTEIN SEQUENCE OF 25-40</scope>
    <scope>FUNCTION</scope>
    <scope>SUBUNIT</scope>
    <scope>DEVELOPMENTAL STAGE</scope>
    <scope>RECOMBINANT EXPRESSION</scope>
    <source>
        <tissue>Salivary gland</tissue>
    </source>
</reference>
<reference evidence="9 10" key="2">
    <citation type="journal article" date="2017" name="Sci. Rep.">
        <title>Structural basis of cholesterol binding by a novel clade of dendritic cell modulators from ticks.</title>
        <authorList>
            <person name="Roversi P."/>
            <person name="Johnson S."/>
            <person name="Preston S.G."/>
            <person name="Nunn M.A."/>
            <person name="Paesen G.C."/>
            <person name="Austyn J.M."/>
            <person name="Nuttall P.A."/>
            <person name="Lea S.M."/>
        </authorList>
    </citation>
    <scope>X-RAY CRYSTALLOGRAPHY (2.24 ANGSTROMS) OF 25-176 IN COMPLEX WITH CHOLESTEROL</scope>
    <scope>GLYCOSYLATION AT ASN-59 AND ASN-155</scope>
    <scope>DISULFIDE BONDS</scope>
    <scope>SUBUNIT</scope>
    <scope>RECOMBINANT EXPRESSION</scope>
</reference>
<feature type="signal peptide" evidence="1">
    <location>
        <begin position="1"/>
        <end position="24"/>
    </location>
</feature>
<feature type="chain" id="PRO_0000456437" description="Japanin" evidence="6">
    <location>
        <begin position="25"/>
        <end position="176"/>
    </location>
</feature>
<feature type="binding site" evidence="2">
    <location>
        <position position="47"/>
    </location>
    <ligand>
        <name>cholesterol</name>
        <dbReference type="ChEBI" id="CHEBI:16113"/>
    </ligand>
</feature>
<feature type="glycosylation site" description="N-linked (GlcNAc...) asparagine" evidence="2 9 10">
    <location>
        <position position="59"/>
    </location>
</feature>
<feature type="glycosylation site" description="N-linked (GlcNAc...) asparagine" evidence="2 9 10">
    <location>
        <position position="155"/>
    </location>
</feature>
<feature type="disulfide bond" evidence="2 9 10">
    <location>
        <begin position="52"/>
        <end position="174"/>
    </location>
</feature>
<feature type="disulfide bond" evidence="2 9 10">
    <location>
        <begin position="138"/>
        <end position="162"/>
    </location>
</feature>
<feature type="sequence conflict" description="In Ref. 1; AA sequence." evidence="5" ref="1">
    <original>G</original>
    <variation>R</variation>
    <location>
        <position position="40"/>
    </location>
</feature>
<feature type="helix" evidence="11">
    <location>
        <begin position="29"/>
        <end position="31"/>
    </location>
</feature>
<feature type="strand" evidence="11">
    <location>
        <begin position="32"/>
        <end position="34"/>
    </location>
</feature>
<feature type="strand" evidence="11">
    <location>
        <begin position="36"/>
        <end position="42"/>
    </location>
</feature>
<feature type="helix" evidence="11">
    <location>
        <begin position="43"/>
        <end position="45"/>
    </location>
</feature>
<feature type="strand" evidence="11">
    <location>
        <begin position="50"/>
        <end position="61"/>
    </location>
</feature>
<feature type="strand" evidence="11">
    <location>
        <begin position="64"/>
        <end position="73"/>
    </location>
</feature>
<feature type="strand" evidence="11">
    <location>
        <begin position="75"/>
        <end position="77"/>
    </location>
</feature>
<feature type="strand" evidence="11">
    <location>
        <begin position="83"/>
        <end position="90"/>
    </location>
</feature>
<feature type="strand" evidence="11">
    <location>
        <begin position="96"/>
        <end position="102"/>
    </location>
</feature>
<feature type="helix" evidence="11">
    <location>
        <begin position="104"/>
        <end position="109"/>
    </location>
</feature>
<feature type="strand" evidence="11">
    <location>
        <begin position="114"/>
        <end position="122"/>
    </location>
</feature>
<feature type="strand" evidence="11">
    <location>
        <begin position="125"/>
        <end position="132"/>
    </location>
</feature>
<feature type="strand" evidence="11">
    <location>
        <begin position="138"/>
        <end position="142"/>
    </location>
</feature>
<feature type="helix" evidence="11">
    <location>
        <begin position="144"/>
        <end position="146"/>
    </location>
</feature>
<feature type="helix" evidence="11">
    <location>
        <begin position="152"/>
        <end position="161"/>
    </location>
</feature>
<feature type="strand" evidence="11">
    <location>
        <begin position="162"/>
        <end position="167"/>
    </location>
</feature>
<feature type="helix" evidence="11">
    <location>
        <begin position="172"/>
        <end position="174"/>
    </location>
</feature>
<sequence length="176" mass="20367">MKVLRCLVCSFYIIVSLITTMTIGTPSMPAINTQTLYLAGHSSKLFERNVGCVKTRYLNQTGDWVTRSLIYVFTFDTEPWVTQAGAFQVKWEPYSPLLRVKASDYVRDNLGAKPDYFIRTYDNDFLLLSDLKEVRSTCSLWVTLKYVDRIPETINRTFYTICPDPVPVPFDERCYP</sequence>
<organism>
    <name type="scientific">Rhipicephalus appendiculatus</name>
    <name type="common">Brown ear tick</name>
    <dbReference type="NCBI Taxonomy" id="34631"/>
    <lineage>
        <taxon>Eukaryota</taxon>
        <taxon>Metazoa</taxon>
        <taxon>Ecdysozoa</taxon>
        <taxon>Arthropoda</taxon>
        <taxon>Chelicerata</taxon>
        <taxon>Arachnida</taxon>
        <taxon>Acari</taxon>
        <taxon>Parasitiformes</taxon>
        <taxon>Ixodida</taxon>
        <taxon>Ixodoidea</taxon>
        <taxon>Ixodidae</taxon>
        <taxon>Rhipicephalinae</taxon>
        <taxon>Rhipicephalus</taxon>
        <taxon>Rhipicephalus</taxon>
    </lineage>
</organism>
<name>JAP_RHIAP</name>
<proteinExistence type="evidence at protein level"/>